<accession>P63206</accession>
<accession>P29688</accession>
<proteinExistence type="inferred from homology"/>
<protein>
    <recommendedName>
        <fullName>Transcriptional regulator GadE</fullName>
    </recommendedName>
</protein>
<reference key="1">
    <citation type="journal article" date="2001" name="Nature">
        <title>Genome sequence of enterohaemorrhagic Escherichia coli O157:H7.</title>
        <authorList>
            <person name="Perna N.T."/>
            <person name="Plunkett G. III"/>
            <person name="Burland V."/>
            <person name="Mau B."/>
            <person name="Glasner J.D."/>
            <person name="Rose D.J."/>
            <person name="Mayhew G.F."/>
            <person name="Evans P.S."/>
            <person name="Gregor J."/>
            <person name="Kirkpatrick H.A."/>
            <person name="Posfai G."/>
            <person name="Hackett J."/>
            <person name="Klink S."/>
            <person name="Boutin A."/>
            <person name="Shao Y."/>
            <person name="Miller L."/>
            <person name="Grotbeck E.J."/>
            <person name="Davis N.W."/>
            <person name="Lim A."/>
            <person name="Dimalanta E.T."/>
            <person name="Potamousis K."/>
            <person name="Apodaca J."/>
            <person name="Anantharaman T.S."/>
            <person name="Lin J."/>
            <person name="Yen G."/>
            <person name="Schwartz D.C."/>
            <person name="Welch R.A."/>
            <person name="Blattner F.R."/>
        </authorList>
    </citation>
    <scope>NUCLEOTIDE SEQUENCE [LARGE SCALE GENOMIC DNA]</scope>
    <source>
        <strain>O157:H7 / EDL933 / ATCC 700927 / EHEC</strain>
    </source>
</reference>
<reference key="2">
    <citation type="journal article" date="2001" name="DNA Res.">
        <title>Complete genome sequence of enterohemorrhagic Escherichia coli O157:H7 and genomic comparison with a laboratory strain K-12.</title>
        <authorList>
            <person name="Hayashi T."/>
            <person name="Makino K."/>
            <person name="Ohnishi M."/>
            <person name="Kurokawa K."/>
            <person name="Ishii K."/>
            <person name="Yokoyama K."/>
            <person name="Han C.-G."/>
            <person name="Ohtsubo E."/>
            <person name="Nakayama K."/>
            <person name="Murata T."/>
            <person name="Tanaka M."/>
            <person name="Tobe T."/>
            <person name="Iida T."/>
            <person name="Takami H."/>
            <person name="Honda T."/>
            <person name="Sasakawa C."/>
            <person name="Ogasawara N."/>
            <person name="Yasunaga T."/>
            <person name="Kuhara S."/>
            <person name="Shiba T."/>
            <person name="Hattori M."/>
            <person name="Shinagawa H."/>
        </authorList>
    </citation>
    <scope>NUCLEOTIDE SEQUENCE [LARGE SCALE GENOMIC DNA]</scope>
    <source>
        <strain>O157:H7 / Sakai / RIMD 0509952 / EHEC</strain>
    </source>
</reference>
<reference key="3">
    <citation type="journal article" date="2003" name="Infect. Immun.">
        <title>Increased adherence to Caco-2 cells caused by disruption of the yhiE and yhiF genes in enterohemorrhagic Escherichia coli O157:H7.</title>
        <authorList>
            <person name="Tatsuno I."/>
            <person name="Nagano K."/>
            <person name="Taguchi K."/>
            <person name="Rong L."/>
            <person name="Mori H."/>
            <person name="Sasakawa C."/>
        </authorList>
    </citation>
    <scope>FUNCTION</scope>
    <source>
        <strain>O157:H7 / Sakai / RIMD 0509952 / EHEC</strain>
    </source>
</reference>
<sequence>MIFLMTKDSFLLQGFWQLKDNHEMIKINSLSEIKKVGNKPFKVIIDTYHNHILDEEAIKFLEKLDAERIIVLAPYHISKLKAKAPIYFVSRKESIKNLLEITYGKHLPHKNSQLCFSHNQFKIMQLILKNKNESNITSTLNISQQTLKIQKFNIMYKLKLRRMSDIVTLGITSYF</sequence>
<evidence type="ECO:0000250" key="1"/>
<evidence type="ECO:0000255" key="2">
    <source>
        <dbReference type="PROSITE-ProRule" id="PRU00411"/>
    </source>
</evidence>
<evidence type="ECO:0000269" key="3">
    <source>
    </source>
</evidence>
<keyword id="KW-0010">Activator</keyword>
<keyword id="KW-0238">DNA-binding</keyword>
<keyword id="KW-1185">Reference proteome</keyword>
<keyword id="KW-0804">Transcription</keyword>
<keyword id="KW-0805">Transcription regulation</keyword>
<name>GADE_ECO57</name>
<gene>
    <name type="primary">gadE</name>
    <name type="ordered locus">Z4925</name>
    <name type="ordered locus">ECs4392</name>
</gene>
<feature type="chain" id="PRO_0000184157" description="Transcriptional regulator GadE">
    <location>
        <begin position="1"/>
        <end position="175"/>
    </location>
</feature>
<feature type="domain" description="HTH luxR-type" evidence="2">
    <location>
        <begin position="109"/>
        <end position="174"/>
    </location>
</feature>
<feature type="DNA-binding region" description="H-T-H motif" evidence="2">
    <location>
        <begin position="133"/>
        <end position="152"/>
    </location>
</feature>
<comment type="function">
    <text evidence="1 3">Regulates the expression of several genes involved in acid resistance. Required for the expression of gadA and gadBC, among others, regardless of media or growth conditions. Binds directly to the 20 bp GAD box found in the control regions of both loci (By similarity). Could be involved in the regulation of the genes coding for the type III secretion system in enterohaemorragic strains.</text>
</comment>
<comment type="induction">
    <text evidence="1">By acidic conditions. Could be induced by EvgA via the induction of YdeO (By similarity).</text>
</comment>
<organism>
    <name type="scientific">Escherichia coli O157:H7</name>
    <dbReference type="NCBI Taxonomy" id="83334"/>
    <lineage>
        <taxon>Bacteria</taxon>
        <taxon>Pseudomonadati</taxon>
        <taxon>Pseudomonadota</taxon>
        <taxon>Gammaproteobacteria</taxon>
        <taxon>Enterobacterales</taxon>
        <taxon>Enterobacteriaceae</taxon>
        <taxon>Escherichia</taxon>
    </lineage>
</organism>
<dbReference type="EMBL" id="AE005174">
    <property type="protein sequence ID" value="AAG58653.1"/>
    <property type="molecule type" value="Genomic_DNA"/>
</dbReference>
<dbReference type="EMBL" id="BA000007">
    <property type="protein sequence ID" value="BAB37815.1"/>
    <property type="molecule type" value="Genomic_DNA"/>
</dbReference>
<dbReference type="PIR" id="A86024">
    <property type="entry name" value="A86024"/>
</dbReference>
<dbReference type="PIR" id="H91177">
    <property type="entry name" value="H91177"/>
</dbReference>
<dbReference type="RefSeq" id="NP_312419.1">
    <property type="nucleotide sequence ID" value="NC_002695.1"/>
</dbReference>
<dbReference type="RefSeq" id="WP_000576690.1">
    <property type="nucleotide sequence ID" value="NZ_VOAI01000004.1"/>
</dbReference>
<dbReference type="SMR" id="P63206"/>
<dbReference type="STRING" id="155864.Z4925"/>
<dbReference type="GeneID" id="915751"/>
<dbReference type="GeneID" id="93778473"/>
<dbReference type="KEGG" id="ece:Z4925"/>
<dbReference type="KEGG" id="ecs:ECs_4392"/>
<dbReference type="PATRIC" id="fig|386585.9.peg.4589"/>
<dbReference type="eggNOG" id="COG2771">
    <property type="taxonomic scope" value="Bacteria"/>
</dbReference>
<dbReference type="HOGENOM" id="CLU_1522892_0_0_6"/>
<dbReference type="OMA" id="YFINRNE"/>
<dbReference type="Proteomes" id="UP000000558">
    <property type="component" value="Chromosome"/>
</dbReference>
<dbReference type="Proteomes" id="UP000002519">
    <property type="component" value="Chromosome"/>
</dbReference>
<dbReference type="GO" id="GO:0003677">
    <property type="term" value="F:DNA binding"/>
    <property type="evidence" value="ECO:0007669"/>
    <property type="project" value="UniProtKB-KW"/>
</dbReference>
<dbReference type="GO" id="GO:0006355">
    <property type="term" value="P:regulation of DNA-templated transcription"/>
    <property type="evidence" value="ECO:0007669"/>
    <property type="project" value="InterPro"/>
</dbReference>
<dbReference type="Gene3D" id="1.10.10.10">
    <property type="entry name" value="Winged helix-like DNA-binding domain superfamily/Winged helix DNA-binding domain"/>
    <property type="match status" value="1"/>
</dbReference>
<dbReference type="InterPro" id="IPR016032">
    <property type="entry name" value="Sig_transdc_resp-reg_C-effctor"/>
</dbReference>
<dbReference type="InterPro" id="IPR000792">
    <property type="entry name" value="Tscrpt_reg_LuxR_C"/>
</dbReference>
<dbReference type="InterPro" id="IPR036388">
    <property type="entry name" value="WH-like_DNA-bd_sf"/>
</dbReference>
<dbReference type="Pfam" id="PF00196">
    <property type="entry name" value="GerE"/>
    <property type="match status" value="1"/>
</dbReference>
<dbReference type="SUPFAM" id="SSF46894">
    <property type="entry name" value="C-terminal effector domain of the bipartite response regulators"/>
    <property type="match status" value="1"/>
</dbReference>
<dbReference type="PROSITE" id="PS50043">
    <property type="entry name" value="HTH_LUXR_2"/>
    <property type="match status" value="1"/>
</dbReference>